<evidence type="ECO:0000255" key="1">
    <source>
        <dbReference type="HAMAP-Rule" id="MF_01347"/>
    </source>
</evidence>
<keyword id="KW-0066">ATP synthesis</keyword>
<keyword id="KW-0067">ATP-binding</keyword>
<keyword id="KW-0139">CF(1)</keyword>
<keyword id="KW-0150">Chloroplast</keyword>
<keyword id="KW-0375">Hydrogen ion transport</keyword>
<keyword id="KW-0406">Ion transport</keyword>
<keyword id="KW-0472">Membrane</keyword>
<keyword id="KW-0547">Nucleotide-binding</keyword>
<keyword id="KW-0934">Plastid</keyword>
<keyword id="KW-0793">Thylakoid</keyword>
<keyword id="KW-1278">Translocase</keyword>
<keyword id="KW-0813">Transport</keyword>
<gene>
    <name evidence="1" type="primary">atpB</name>
</gene>
<dbReference type="EC" id="7.1.2.2" evidence="1"/>
<dbReference type="EMBL" id="U93840">
    <property type="protein sequence ID" value="AAB51748.2"/>
    <property type="molecule type" value="Genomic_DNA"/>
</dbReference>
<dbReference type="SMR" id="O03064"/>
<dbReference type="GO" id="GO:0009535">
    <property type="term" value="C:chloroplast thylakoid membrane"/>
    <property type="evidence" value="ECO:0007669"/>
    <property type="project" value="UniProtKB-SubCell"/>
</dbReference>
<dbReference type="GO" id="GO:0005739">
    <property type="term" value="C:mitochondrion"/>
    <property type="evidence" value="ECO:0007669"/>
    <property type="project" value="GOC"/>
</dbReference>
<dbReference type="GO" id="GO:0045259">
    <property type="term" value="C:proton-transporting ATP synthase complex"/>
    <property type="evidence" value="ECO:0007669"/>
    <property type="project" value="UniProtKB-KW"/>
</dbReference>
<dbReference type="GO" id="GO:0005524">
    <property type="term" value="F:ATP binding"/>
    <property type="evidence" value="ECO:0007669"/>
    <property type="project" value="UniProtKB-KW"/>
</dbReference>
<dbReference type="GO" id="GO:0016887">
    <property type="term" value="F:ATP hydrolysis activity"/>
    <property type="evidence" value="ECO:0007669"/>
    <property type="project" value="InterPro"/>
</dbReference>
<dbReference type="GO" id="GO:0046933">
    <property type="term" value="F:proton-transporting ATP synthase activity, rotational mechanism"/>
    <property type="evidence" value="ECO:0007669"/>
    <property type="project" value="InterPro"/>
</dbReference>
<dbReference type="GO" id="GO:0042776">
    <property type="term" value="P:proton motive force-driven mitochondrial ATP synthesis"/>
    <property type="evidence" value="ECO:0007669"/>
    <property type="project" value="TreeGrafter"/>
</dbReference>
<dbReference type="CDD" id="cd18110">
    <property type="entry name" value="ATP-synt_F1_beta_C"/>
    <property type="match status" value="1"/>
</dbReference>
<dbReference type="CDD" id="cd01133">
    <property type="entry name" value="F1-ATPase_beta_CD"/>
    <property type="match status" value="1"/>
</dbReference>
<dbReference type="FunFam" id="1.10.1140.10:FF:000001">
    <property type="entry name" value="ATP synthase subunit beta"/>
    <property type="match status" value="1"/>
</dbReference>
<dbReference type="FunFam" id="3.40.50.300:FF:000004">
    <property type="entry name" value="ATP synthase subunit beta"/>
    <property type="match status" value="1"/>
</dbReference>
<dbReference type="Gene3D" id="1.10.1140.10">
    <property type="entry name" value="Bovine Mitochondrial F1-atpase, Atp Synthase Beta Chain, Chain D, domain 3"/>
    <property type="match status" value="1"/>
</dbReference>
<dbReference type="Gene3D" id="3.40.50.300">
    <property type="entry name" value="P-loop containing nucleotide triphosphate hydrolases"/>
    <property type="match status" value="1"/>
</dbReference>
<dbReference type="HAMAP" id="MF_01347">
    <property type="entry name" value="ATP_synth_beta_bact"/>
    <property type="match status" value="1"/>
</dbReference>
<dbReference type="InterPro" id="IPR003593">
    <property type="entry name" value="AAA+_ATPase"/>
</dbReference>
<dbReference type="InterPro" id="IPR055190">
    <property type="entry name" value="ATP-synt_VA_C"/>
</dbReference>
<dbReference type="InterPro" id="IPR005722">
    <property type="entry name" value="ATP_synth_F1_bsu"/>
</dbReference>
<dbReference type="InterPro" id="IPR020003">
    <property type="entry name" value="ATPase_a/bsu_AS"/>
</dbReference>
<dbReference type="InterPro" id="IPR050053">
    <property type="entry name" value="ATPase_alpha/beta_chains"/>
</dbReference>
<dbReference type="InterPro" id="IPR000194">
    <property type="entry name" value="ATPase_F1/V1/A1_a/bsu_nucl-bd"/>
</dbReference>
<dbReference type="InterPro" id="IPR024034">
    <property type="entry name" value="ATPase_F1/V1_b/a_C"/>
</dbReference>
<dbReference type="InterPro" id="IPR027417">
    <property type="entry name" value="P-loop_NTPase"/>
</dbReference>
<dbReference type="NCBIfam" id="TIGR01039">
    <property type="entry name" value="atpD"/>
    <property type="match status" value="1"/>
</dbReference>
<dbReference type="PANTHER" id="PTHR15184">
    <property type="entry name" value="ATP SYNTHASE"/>
    <property type="match status" value="1"/>
</dbReference>
<dbReference type="PANTHER" id="PTHR15184:SF71">
    <property type="entry name" value="ATP SYNTHASE SUBUNIT BETA, MITOCHONDRIAL"/>
    <property type="match status" value="1"/>
</dbReference>
<dbReference type="Pfam" id="PF00006">
    <property type="entry name" value="ATP-synt_ab"/>
    <property type="match status" value="1"/>
</dbReference>
<dbReference type="Pfam" id="PF22919">
    <property type="entry name" value="ATP-synt_VA_C"/>
    <property type="match status" value="1"/>
</dbReference>
<dbReference type="SMART" id="SM00382">
    <property type="entry name" value="AAA"/>
    <property type="match status" value="1"/>
</dbReference>
<dbReference type="SUPFAM" id="SSF47917">
    <property type="entry name" value="C-terminal domain of alpha and beta subunits of F1 ATP synthase"/>
    <property type="match status" value="1"/>
</dbReference>
<dbReference type="SUPFAM" id="SSF52540">
    <property type="entry name" value="P-loop containing nucleoside triphosphate hydrolases"/>
    <property type="match status" value="1"/>
</dbReference>
<dbReference type="PROSITE" id="PS00152">
    <property type="entry name" value="ATPASE_ALPHA_BETA"/>
    <property type="match status" value="1"/>
</dbReference>
<organism>
    <name type="scientific">Adiantum raddianum</name>
    <name type="common">Maidenhair fern</name>
    <dbReference type="NCBI Taxonomy" id="32168"/>
    <lineage>
        <taxon>Eukaryota</taxon>
        <taxon>Viridiplantae</taxon>
        <taxon>Streptophyta</taxon>
        <taxon>Embryophyta</taxon>
        <taxon>Tracheophyta</taxon>
        <taxon>Polypodiopsida</taxon>
        <taxon>Polypodiidae</taxon>
        <taxon>Polypodiales</taxon>
        <taxon>Pteridineae</taxon>
        <taxon>Pteridaceae</taxon>
        <taxon>Vittarioideae</taxon>
        <taxon>Adiantum</taxon>
    </lineage>
</organism>
<geneLocation type="chloroplast"/>
<protein>
    <recommendedName>
        <fullName evidence="1">ATP synthase subunit beta, chloroplastic</fullName>
        <ecNumber evidence="1">7.1.2.2</ecNumber>
    </recommendedName>
    <alternativeName>
        <fullName evidence="1">ATP synthase F1 sector subunit beta</fullName>
    </alternativeName>
    <alternativeName>
        <fullName evidence="1">F-ATPase subunit beta</fullName>
    </alternativeName>
</protein>
<comment type="function">
    <text evidence="1">Produces ATP from ADP in the presence of a proton gradient across the membrane. The catalytic sites are hosted primarily by the beta subunits.</text>
</comment>
<comment type="catalytic activity">
    <reaction evidence="1">
        <text>ATP + H2O + 4 H(+)(in) = ADP + phosphate + 5 H(+)(out)</text>
        <dbReference type="Rhea" id="RHEA:57720"/>
        <dbReference type="ChEBI" id="CHEBI:15377"/>
        <dbReference type="ChEBI" id="CHEBI:15378"/>
        <dbReference type="ChEBI" id="CHEBI:30616"/>
        <dbReference type="ChEBI" id="CHEBI:43474"/>
        <dbReference type="ChEBI" id="CHEBI:456216"/>
        <dbReference type="EC" id="7.1.2.2"/>
    </reaction>
</comment>
<comment type="subunit">
    <text evidence="1">F-type ATPases have 2 components, CF(1) - the catalytic core - and CF(0) - the membrane proton channel. CF(1) has five subunits: alpha(3), beta(3), gamma(1), delta(1), epsilon(1). CF(0) has four main subunits: a(1), b(1), b'(1) and c(9-12).</text>
</comment>
<comment type="subcellular location">
    <subcellularLocation>
        <location evidence="1">Plastid</location>
        <location evidence="1">Chloroplast thylakoid membrane</location>
        <topology evidence="1">Peripheral membrane protein</topology>
    </subcellularLocation>
</comment>
<comment type="similarity">
    <text evidence="1">Belongs to the ATPase alpha/beta chains family.</text>
</comment>
<sequence>SVPVGETTLGRIFNVLGEPVDNLGPVQNSTTFPIHRSAPAFTQLDTKLSIFETGIKVVDLLAPYRRGGKIGLFGGAGVGKTVLIMELINNIAKAHGGVSVSGGVGERTREGNDLYMETKESKVINEQNIAESKVALVYGQMNEPPGARMRVGLTASTMAEYFRDINKRDVLLFIDNIFRFVQAGSEVSALLGRMPSAVGYQPTLGTEMGSLQERITSTKEGSITSIQAVYVPADDLTDPAPATTFAHLDATTVLSRGLAAKGIYPAVDPLDSTSTMLQPWIVGEEHYETAQGVKQTLQRYKELQDIIAIPGLDELSEEDRLTVARARKIERFLSQPFFVAEVFTGSPGKYVSLPETIKGFQMILPGELDNLPEQASYLVGNIDEAAAKAAALQAGG</sequence>
<feature type="chain" id="PRO_0000144491" description="ATP synthase subunit beta, chloroplastic">
    <location>
        <begin position="1" status="less than"/>
        <end position="396"/>
    </location>
</feature>
<feature type="binding site" evidence="1">
    <location>
        <begin position="74"/>
        <end position="81"/>
    </location>
    <ligand>
        <name>ATP</name>
        <dbReference type="ChEBI" id="CHEBI:30616"/>
    </ligand>
</feature>
<feature type="non-terminal residue">
    <location>
        <position position="1"/>
    </location>
</feature>
<accession>O03064</accession>
<reference key="1">
    <citation type="journal article" date="1997" name="Am. J. Bot.">
        <title>Evaluation of atpB nucleotide sequences for phylogenetic studies of ferns and other pteridophytes.</title>
        <authorList>
            <person name="Wolf P.G."/>
        </authorList>
    </citation>
    <scope>NUCLEOTIDE SEQUENCE [GENOMIC DNA]</scope>
    <source>
        <tissue>Frond</tissue>
    </source>
</reference>
<reference key="2">
    <citation type="submission" date="2000-01" db="EMBL/GenBank/DDBJ databases">
        <authorList>
            <person name="Wolf P.G."/>
            <person name="Su P.-H."/>
        </authorList>
    </citation>
    <scope>SEQUENCE REVISION</scope>
</reference>
<proteinExistence type="inferred from homology"/>
<name>ATPB_ADIRA</name>